<proteinExistence type="inferred from homology"/>
<dbReference type="EMBL" id="CP000263">
    <property type="protein sequence ID" value="ABJ90708.1"/>
    <property type="molecule type" value="Genomic_DNA"/>
</dbReference>
<dbReference type="RefSeq" id="WP_011672627.1">
    <property type="nucleotide sequence ID" value="NC_008513.1"/>
</dbReference>
<dbReference type="SMR" id="Q057J1"/>
<dbReference type="STRING" id="372461.BCc_240"/>
<dbReference type="KEGG" id="bcc:BCc_240"/>
<dbReference type="eggNOG" id="COG0211">
    <property type="taxonomic scope" value="Bacteria"/>
</dbReference>
<dbReference type="HOGENOM" id="CLU_095424_4_1_6"/>
<dbReference type="OrthoDB" id="9803474at2"/>
<dbReference type="Proteomes" id="UP000000669">
    <property type="component" value="Chromosome"/>
</dbReference>
<dbReference type="GO" id="GO:0022625">
    <property type="term" value="C:cytosolic large ribosomal subunit"/>
    <property type="evidence" value="ECO:0007669"/>
    <property type="project" value="TreeGrafter"/>
</dbReference>
<dbReference type="GO" id="GO:0003735">
    <property type="term" value="F:structural constituent of ribosome"/>
    <property type="evidence" value="ECO:0007669"/>
    <property type="project" value="InterPro"/>
</dbReference>
<dbReference type="GO" id="GO:0006412">
    <property type="term" value="P:translation"/>
    <property type="evidence" value="ECO:0007669"/>
    <property type="project" value="UniProtKB-UniRule"/>
</dbReference>
<dbReference type="FunFam" id="2.40.50.100:FF:000060">
    <property type="entry name" value="Apicoplast ribosomal protein L27"/>
    <property type="match status" value="1"/>
</dbReference>
<dbReference type="Gene3D" id="2.40.50.100">
    <property type="match status" value="1"/>
</dbReference>
<dbReference type="HAMAP" id="MF_00539">
    <property type="entry name" value="Ribosomal_bL27"/>
    <property type="match status" value="1"/>
</dbReference>
<dbReference type="InterPro" id="IPR001684">
    <property type="entry name" value="Ribosomal_bL27"/>
</dbReference>
<dbReference type="InterPro" id="IPR018261">
    <property type="entry name" value="Ribosomal_bL27_CS"/>
</dbReference>
<dbReference type="NCBIfam" id="TIGR00062">
    <property type="entry name" value="L27"/>
    <property type="match status" value="1"/>
</dbReference>
<dbReference type="PANTHER" id="PTHR15893:SF0">
    <property type="entry name" value="LARGE RIBOSOMAL SUBUNIT PROTEIN BL27M"/>
    <property type="match status" value="1"/>
</dbReference>
<dbReference type="PANTHER" id="PTHR15893">
    <property type="entry name" value="RIBOSOMAL PROTEIN L27"/>
    <property type="match status" value="1"/>
</dbReference>
<dbReference type="Pfam" id="PF01016">
    <property type="entry name" value="Ribosomal_L27"/>
    <property type="match status" value="1"/>
</dbReference>
<dbReference type="PRINTS" id="PR00063">
    <property type="entry name" value="RIBOSOMALL27"/>
</dbReference>
<dbReference type="SUPFAM" id="SSF110324">
    <property type="entry name" value="Ribosomal L27 protein-like"/>
    <property type="match status" value="1"/>
</dbReference>
<dbReference type="PROSITE" id="PS00831">
    <property type="entry name" value="RIBOSOMAL_L27"/>
    <property type="match status" value="1"/>
</dbReference>
<organism>
    <name type="scientific">Buchnera aphidicola subsp. Cinara cedri (strain Cc)</name>
    <dbReference type="NCBI Taxonomy" id="372461"/>
    <lineage>
        <taxon>Bacteria</taxon>
        <taxon>Pseudomonadati</taxon>
        <taxon>Pseudomonadota</taxon>
        <taxon>Gammaproteobacteria</taxon>
        <taxon>Enterobacterales</taxon>
        <taxon>Erwiniaceae</taxon>
        <taxon>Buchnera</taxon>
    </lineage>
</organism>
<protein>
    <recommendedName>
        <fullName evidence="1">Large ribosomal subunit protein bL27</fullName>
    </recommendedName>
    <alternativeName>
        <fullName evidence="3">50S ribosomal protein L27</fullName>
    </alternativeName>
</protein>
<comment type="similarity">
    <text evidence="1">Belongs to the bacterial ribosomal protein bL27 family.</text>
</comment>
<evidence type="ECO:0000255" key="1">
    <source>
        <dbReference type="HAMAP-Rule" id="MF_00539"/>
    </source>
</evidence>
<evidence type="ECO:0000256" key="2">
    <source>
        <dbReference type="SAM" id="MobiDB-lite"/>
    </source>
</evidence>
<evidence type="ECO:0000305" key="3"/>
<keyword id="KW-1185">Reference proteome</keyword>
<keyword id="KW-0687">Ribonucleoprotein</keyword>
<keyword id="KW-0689">Ribosomal protein</keyword>
<gene>
    <name evidence="1" type="primary">rpmA</name>
    <name type="ordered locus">BCc_240</name>
</gene>
<sequence>MAHKKAGGSSRNGRDSRSKRLGIKKYGGEYVSSGNILVRQRGTKFHPGENVKCGKDYTLYSIIEGIVKFKKRGKLKKKYISVIKLNNLNKKLQNRQISIKY</sequence>
<name>RL27_BUCCC</name>
<accession>Q057J1</accession>
<reference key="1">
    <citation type="journal article" date="2006" name="Science">
        <title>A small microbial genome: the end of a long symbiotic relationship?</title>
        <authorList>
            <person name="Perez-Brocal V."/>
            <person name="Gil R."/>
            <person name="Ramos S."/>
            <person name="Lamelas A."/>
            <person name="Postigo M."/>
            <person name="Michelena J.M."/>
            <person name="Silva F.J."/>
            <person name="Moya A."/>
            <person name="Latorre A."/>
        </authorList>
    </citation>
    <scope>NUCLEOTIDE SEQUENCE [LARGE SCALE GENOMIC DNA]</scope>
    <source>
        <strain>Cc</strain>
    </source>
</reference>
<feature type="chain" id="PRO_1000017425" description="Large ribosomal subunit protein bL27">
    <location>
        <begin position="1"/>
        <end position="101"/>
    </location>
</feature>
<feature type="region of interest" description="Disordered" evidence="2">
    <location>
        <begin position="1"/>
        <end position="21"/>
    </location>
</feature>